<protein>
    <recommendedName>
        <fullName>Cytochrome c oxidase subunit 4 isoform 1, mitochondrial</fullName>
    </recommendedName>
    <alternativeName>
        <fullName>Cytochrome c oxidase polypeptide IV</fullName>
    </alternativeName>
    <alternativeName>
        <fullName>Cytochrome c oxidase subunit IV isoform 1</fullName>
        <shortName>COX IV-1</shortName>
    </alternativeName>
</protein>
<gene>
    <name type="primary">COX4I1</name>
    <name type="synonym">COX4</name>
</gene>
<dbReference type="EMBL" id="L34015">
    <property type="protein sequence ID" value="AAA30461.1"/>
    <property type="molecule type" value="Genomic_DNA"/>
</dbReference>
<dbReference type="EMBL" id="L34012">
    <property type="protein sequence ID" value="AAA30461.1"/>
    <property type="status" value="JOINED"/>
    <property type="molecule type" value="Genomic_DNA"/>
</dbReference>
<dbReference type="EMBL" id="L34013">
    <property type="protein sequence ID" value="AAA30461.1"/>
    <property type="status" value="JOINED"/>
    <property type="molecule type" value="Genomic_DNA"/>
</dbReference>
<dbReference type="EMBL" id="L34014">
    <property type="protein sequence ID" value="AAA30461.1"/>
    <property type="status" value="JOINED"/>
    <property type="molecule type" value="Genomic_DNA"/>
</dbReference>
<dbReference type="EMBL" id="U11070">
    <property type="protein sequence ID" value="AAA93149.1"/>
    <property type="molecule type" value="Genomic_DNA"/>
</dbReference>
<dbReference type="EMBL" id="U11067">
    <property type="protein sequence ID" value="AAA93149.1"/>
    <property type="status" value="JOINED"/>
    <property type="molecule type" value="Genomic_DNA"/>
</dbReference>
<dbReference type="EMBL" id="U11068">
    <property type="protein sequence ID" value="AAA93149.1"/>
    <property type="status" value="JOINED"/>
    <property type="molecule type" value="Genomic_DNA"/>
</dbReference>
<dbReference type="EMBL" id="U11069">
    <property type="protein sequence ID" value="AAA93149.1"/>
    <property type="status" value="JOINED"/>
    <property type="molecule type" value="Genomic_DNA"/>
</dbReference>
<dbReference type="EMBL" id="BT021029">
    <property type="protein sequence ID" value="AAX09046.1"/>
    <property type="molecule type" value="mRNA"/>
</dbReference>
<dbReference type="EMBL" id="BC102733">
    <property type="protein sequence ID" value="AAI02734.1"/>
    <property type="molecule type" value="mRNA"/>
</dbReference>
<dbReference type="EMBL" id="K02064">
    <property type="protein sequence ID" value="AAA30463.1"/>
    <property type="molecule type" value="mRNA"/>
</dbReference>
<dbReference type="PIR" id="A30618">
    <property type="entry name" value="OLBO4"/>
</dbReference>
<dbReference type="RefSeq" id="NP_001001439.1">
    <property type="nucleotide sequence ID" value="NM_001001439.3"/>
</dbReference>
<dbReference type="RefSeq" id="XP_005218495.1">
    <property type="nucleotide sequence ID" value="XM_005218438.2"/>
</dbReference>
<dbReference type="PDB" id="1OCC">
    <property type="method" value="X-ray"/>
    <property type="resolution" value="2.80 A"/>
    <property type="chains" value="D/Q=23-169"/>
</dbReference>
<dbReference type="PDB" id="1OCO">
    <property type="method" value="X-ray"/>
    <property type="resolution" value="2.80 A"/>
    <property type="chains" value="D/Q=23-169"/>
</dbReference>
<dbReference type="PDB" id="1OCR">
    <property type="method" value="X-ray"/>
    <property type="resolution" value="2.35 A"/>
    <property type="chains" value="D/Q=23-169"/>
</dbReference>
<dbReference type="PDB" id="1OCZ">
    <property type="method" value="X-ray"/>
    <property type="resolution" value="2.90 A"/>
    <property type="chains" value="D/Q=23-169"/>
</dbReference>
<dbReference type="PDB" id="1V54">
    <property type="method" value="X-ray"/>
    <property type="resolution" value="1.80 A"/>
    <property type="chains" value="D/Q=23-169"/>
</dbReference>
<dbReference type="PDB" id="1V55">
    <property type="method" value="X-ray"/>
    <property type="resolution" value="1.90 A"/>
    <property type="chains" value="D/Q=23-169"/>
</dbReference>
<dbReference type="PDB" id="2DYR">
    <property type="method" value="X-ray"/>
    <property type="resolution" value="1.80 A"/>
    <property type="chains" value="D/Q=23-169"/>
</dbReference>
<dbReference type="PDB" id="2DYS">
    <property type="method" value="X-ray"/>
    <property type="resolution" value="2.20 A"/>
    <property type="chains" value="D/Q=23-169"/>
</dbReference>
<dbReference type="PDB" id="2EIJ">
    <property type="method" value="X-ray"/>
    <property type="resolution" value="1.90 A"/>
    <property type="chains" value="D/Q=23-169"/>
</dbReference>
<dbReference type="PDB" id="2EIK">
    <property type="method" value="X-ray"/>
    <property type="resolution" value="2.10 A"/>
    <property type="chains" value="D/Q=23-169"/>
</dbReference>
<dbReference type="PDB" id="2EIL">
    <property type="method" value="X-ray"/>
    <property type="resolution" value="2.10 A"/>
    <property type="chains" value="D/Q=23-169"/>
</dbReference>
<dbReference type="PDB" id="2EIM">
    <property type="method" value="X-ray"/>
    <property type="resolution" value="2.60 A"/>
    <property type="chains" value="D/Q=23-169"/>
</dbReference>
<dbReference type="PDB" id="2EIN">
    <property type="method" value="X-ray"/>
    <property type="resolution" value="2.70 A"/>
    <property type="chains" value="D/Q=23-169"/>
</dbReference>
<dbReference type="PDB" id="2OCC">
    <property type="method" value="X-ray"/>
    <property type="resolution" value="2.30 A"/>
    <property type="chains" value="D/Q=23-169"/>
</dbReference>
<dbReference type="PDB" id="2Y69">
    <property type="method" value="X-ray"/>
    <property type="resolution" value="1.95 A"/>
    <property type="chains" value="D/Q=1-169"/>
</dbReference>
<dbReference type="PDB" id="2YBB">
    <property type="method" value="EM"/>
    <property type="resolution" value="19.00 A"/>
    <property type="chains" value="O=23-169"/>
</dbReference>
<dbReference type="PDB" id="2ZXW">
    <property type="method" value="X-ray"/>
    <property type="resolution" value="2.50 A"/>
    <property type="chains" value="D/Q=23-169"/>
</dbReference>
<dbReference type="PDB" id="3ABK">
    <property type="method" value="X-ray"/>
    <property type="resolution" value="2.00 A"/>
    <property type="chains" value="D/Q=23-169"/>
</dbReference>
<dbReference type="PDB" id="3ABL">
    <property type="method" value="X-ray"/>
    <property type="resolution" value="2.10 A"/>
    <property type="chains" value="D/Q=23-169"/>
</dbReference>
<dbReference type="PDB" id="3ABM">
    <property type="method" value="X-ray"/>
    <property type="resolution" value="1.95 A"/>
    <property type="chains" value="D/Q=23-169"/>
</dbReference>
<dbReference type="PDB" id="3AG1">
    <property type="method" value="X-ray"/>
    <property type="resolution" value="2.20 A"/>
    <property type="chains" value="D/Q=23-169"/>
</dbReference>
<dbReference type="PDB" id="3AG2">
    <property type="method" value="X-ray"/>
    <property type="resolution" value="1.80 A"/>
    <property type="chains" value="D/Q=23-169"/>
</dbReference>
<dbReference type="PDB" id="3AG3">
    <property type="method" value="X-ray"/>
    <property type="resolution" value="1.80 A"/>
    <property type="chains" value="D/Q=23-169"/>
</dbReference>
<dbReference type="PDB" id="3AG4">
    <property type="method" value="X-ray"/>
    <property type="resolution" value="2.05 A"/>
    <property type="chains" value="D/Q=23-169"/>
</dbReference>
<dbReference type="PDB" id="3ASN">
    <property type="method" value="X-ray"/>
    <property type="resolution" value="3.00 A"/>
    <property type="chains" value="D/Q=23-169"/>
</dbReference>
<dbReference type="PDB" id="3ASO">
    <property type="method" value="X-ray"/>
    <property type="resolution" value="2.30 A"/>
    <property type="chains" value="D/Q=23-169"/>
</dbReference>
<dbReference type="PDB" id="3WG7">
    <property type="method" value="X-ray"/>
    <property type="resolution" value="1.90 A"/>
    <property type="chains" value="D/Q=23-169"/>
</dbReference>
<dbReference type="PDB" id="3X2Q">
    <property type="method" value="X-ray"/>
    <property type="resolution" value="2.00 A"/>
    <property type="chains" value="D/Q=23-169"/>
</dbReference>
<dbReference type="PDB" id="5B1A">
    <property type="method" value="X-ray"/>
    <property type="resolution" value="1.50 A"/>
    <property type="chains" value="D/Q=23-169"/>
</dbReference>
<dbReference type="PDB" id="5B1B">
    <property type="method" value="X-ray"/>
    <property type="resolution" value="1.60 A"/>
    <property type="chains" value="D/Q=23-169"/>
</dbReference>
<dbReference type="PDB" id="5B3S">
    <property type="method" value="X-ray"/>
    <property type="resolution" value="1.68 A"/>
    <property type="chains" value="D/Q=23-169"/>
</dbReference>
<dbReference type="PDB" id="5GPN">
    <property type="method" value="EM"/>
    <property type="resolution" value="5.40 A"/>
    <property type="chains" value="1=23-169"/>
</dbReference>
<dbReference type="PDB" id="5IY5">
    <property type="method" value="X-ray"/>
    <property type="resolution" value="2.00 A"/>
    <property type="chains" value="D/Q=26-169"/>
</dbReference>
<dbReference type="PDB" id="5LUF">
    <property type="method" value="EM"/>
    <property type="resolution" value="9.10 A"/>
    <property type="chains" value="1=23-169"/>
</dbReference>
<dbReference type="PDB" id="5W97">
    <property type="method" value="X-ray"/>
    <property type="resolution" value="2.30 A"/>
    <property type="chains" value="D/d=23-169"/>
</dbReference>
<dbReference type="PDB" id="5WAU">
    <property type="method" value="X-ray"/>
    <property type="resolution" value="1.95 A"/>
    <property type="chains" value="D/d=23-169"/>
</dbReference>
<dbReference type="PDB" id="5X19">
    <property type="method" value="X-ray"/>
    <property type="resolution" value="2.20 A"/>
    <property type="chains" value="D/Q=23-169"/>
</dbReference>
<dbReference type="PDB" id="5X1B">
    <property type="method" value="X-ray"/>
    <property type="resolution" value="2.40 A"/>
    <property type="chains" value="D/Q=23-169"/>
</dbReference>
<dbReference type="PDB" id="5X1F">
    <property type="method" value="X-ray"/>
    <property type="resolution" value="2.20 A"/>
    <property type="chains" value="D/Q=23-169"/>
</dbReference>
<dbReference type="PDB" id="5XDQ">
    <property type="method" value="X-ray"/>
    <property type="resolution" value="1.77 A"/>
    <property type="chains" value="D/Q=23-169"/>
</dbReference>
<dbReference type="PDB" id="5XDX">
    <property type="method" value="X-ray"/>
    <property type="resolution" value="1.99 A"/>
    <property type="chains" value="D/Q=23-169"/>
</dbReference>
<dbReference type="PDB" id="5XTH">
    <property type="method" value="EM"/>
    <property type="resolution" value="3.90 A"/>
    <property type="chains" value="0=26-169"/>
</dbReference>
<dbReference type="PDB" id="5XTI">
    <property type="method" value="EM"/>
    <property type="resolution" value="17.40 A"/>
    <property type="chains" value="0/B0=26-169"/>
</dbReference>
<dbReference type="PDB" id="5Z84">
    <property type="method" value="X-ray"/>
    <property type="resolution" value="1.85 A"/>
    <property type="chains" value="D/Q=23-169"/>
</dbReference>
<dbReference type="PDB" id="5Z85">
    <property type="method" value="X-ray"/>
    <property type="resolution" value="1.85 A"/>
    <property type="chains" value="D/Q=23-169"/>
</dbReference>
<dbReference type="PDB" id="5Z86">
    <property type="method" value="X-ray"/>
    <property type="resolution" value="1.85 A"/>
    <property type="chains" value="D/Q=23-169"/>
</dbReference>
<dbReference type="PDB" id="5ZCO">
    <property type="method" value="X-ray"/>
    <property type="resolution" value="1.90 A"/>
    <property type="chains" value="D/Q=23-169"/>
</dbReference>
<dbReference type="PDB" id="5ZCP">
    <property type="method" value="X-ray"/>
    <property type="resolution" value="1.65 A"/>
    <property type="chains" value="D/Q=23-169"/>
</dbReference>
<dbReference type="PDB" id="5ZCQ">
    <property type="method" value="X-ray"/>
    <property type="resolution" value="1.65 A"/>
    <property type="chains" value="D/Q=23-169"/>
</dbReference>
<dbReference type="PDB" id="6J8M">
    <property type="method" value="X-ray"/>
    <property type="resolution" value="1.90 A"/>
    <property type="chains" value="D/Q=23-169"/>
</dbReference>
<dbReference type="PDB" id="6JUW">
    <property type="method" value="X-ray"/>
    <property type="resolution" value="1.80 A"/>
    <property type="chains" value="D/Q=26-169"/>
</dbReference>
<dbReference type="PDB" id="6JY3">
    <property type="method" value="X-ray"/>
    <property type="resolution" value="1.85 A"/>
    <property type="chains" value="D=23-169"/>
</dbReference>
<dbReference type="PDB" id="6JY4">
    <property type="method" value="X-ray"/>
    <property type="resolution" value="1.95 A"/>
    <property type="chains" value="D=23-169"/>
</dbReference>
<dbReference type="PDB" id="6NKN">
    <property type="method" value="X-ray"/>
    <property type="resolution" value="2.50 A"/>
    <property type="chains" value="D/Q=23-169"/>
</dbReference>
<dbReference type="PDB" id="6NMF">
    <property type="method" value="X-ray"/>
    <property type="resolution" value="2.80 A"/>
    <property type="chains" value="D/Q=23-169"/>
</dbReference>
<dbReference type="PDB" id="6NMP">
    <property type="method" value="X-ray"/>
    <property type="resolution" value="2.90 A"/>
    <property type="chains" value="D/Q=23-169"/>
</dbReference>
<dbReference type="PDB" id="7COH">
    <property type="method" value="X-ray"/>
    <property type="resolution" value="1.30 A"/>
    <property type="chains" value="D/Q=23-169"/>
</dbReference>
<dbReference type="PDB" id="7CP5">
    <property type="method" value="X-ray"/>
    <property type="resolution" value="1.76 A"/>
    <property type="chains" value="D/Q=26-169"/>
</dbReference>
<dbReference type="PDB" id="7D5W">
    <property type="method" value="X-ray"/>
    <property type="resolution" value="1.84 A"/>
    <property type="chains" value="D/Q=26-169"/>
</dbReference>
<dbReference type="PDB" id="7D5X">
    <property type="method" value="X-ray"/>
    <property type="resolution" value="1.74 A"/>
    <property type="chains" value="D/Q=26-169"/>
</dbReference>
<dbReference type="PDB" id="7DGQ">
    <property type="method" value="EM"/>
    <property type="resolution" value="5.00 A"/>
    <property type="chains" value="A7=1-169"/>
</dbReference>
<dbReference type="PDB" id="7DGR">
    <property type="method" value="EM"/>
    <property type="resolution" value="4.60 A"/>
    <property type="chains" value="A7=1-169"/>
</dbReference>
<dbReference type="PDB" id="7DGS">
    <property type="method" value="EM"/>
    <property type="resolution" value="7.80 A"/>
    <property type="chains" value="A7=1-169"/>
</dbReference>
<dbReference type="PDB" id="7DKF">
    <property type="method" value="EM"/>
    <property type="resolution" value="8.30 A"/>
    <property type="chains" value="D3=1-169"/>
</dbReference>
<dbReference type="PDB" id="7EV7">
    <property type="method" value="X-ray"/>
    <property type="resolution" value="1.70 A"/>
    <property type="chains" value="D/Q=23-169"/>
</dbReference>
<dbReference type="PDB" id="7THU">
    <property type="method" value="X-ray"/>
    <property type="resolution" value="1.93 A"/>
    <property type="chains" value="DDD/QQQ=23-169"/>
</dbReference>
<dbReference type="PDB" id="7TIE">
    <property type="method" value="X-ray"/>
    <property type="resolution" value="1.90 A"/>
    <property type="chains" value="DDD/QQQ=23-169"/>
</dbReference>
<dbReference type="PDB" id="7TIH">
    <property type="method" value="X-ray"/>
    <property type="resolution" value="2.35 A"/>
    <property type="chains" value="DDD/QQQ=23-169"/>
</dbReference>
<dbReference type="PDB" id="7TII">
    <property type="method" value="X-ray"/>
    <property type="resolution" value="2.45 A"/>
    <property type="chains" value="DDD/QQQ=23-169"/>
</dbReference>
<dbReference type="PDB" id="7VUW">
    <property type="method" value="X-ray"/>
    <property type="resolution" value="1.60 A"/>
    <property type="chains" value="D/Q=26-169"/>
</dbReference>
<dbReference type="PDB" id="7VVR">
    <property type="method" value="X-ray"/>
    <property type="resolution" value="1.65 A"/>
    <property type="chains" value="D/Q=26-169"/>
</dbReference>
<dbReference type="PDB" id="7W3E">
    <property type="method" value="X-ray"/>
    <property type="resolution" value="1.45 A"/>
    <property type="chains" value="D/Q=26-169"/>
</dbReference>
<dbReference type="PDB" id="7XMA">
    <property type="method" value="X-ray"/>
    <property type="resolution" value="2.20 A"/>
    <property type="chains" value="D/Q=23-169"/>
</dbReference>
<dbReference type="PDB" id="7XMB">
    <property type="method" value="X-ray"/>
    <property type="resolution" value="2.20 A"/>
    <property type="chains" value="D/Q=23-169"/>
</dbReference>
<dbReference type="PDB" id="7Y44">
    <property type="method" value="X-ray"/>
    <property type="resolution" value="1.90 A"/>
    <property type="chains" value="D/Q=23-169"/>
</dbReference>
<dbReference type="PDB" id="7YPY">
    <property type="method" value="X-ray"/>
    <property type="resolution" value="1.50 A"/>
    <property type="chains" value="D/Q=23-169"/>
</dbReference>
<dbReference type="PDB" id="8D4T">
    <property type="method" value="EM"/>
    <property type="resolution" value="3.10 A"/>
    <property type="chains" value="Q=32-168"/>
</dbReference>
<dbReference type="PDB" id="8GBT">
    <property type="method" value="X-ray"/>
    <property type="resolution" value="2.80 A"/>
    <property type="chains" value="D/Q=23-169"/>
</dbReference>
<dbReference type="PDB" id="8GCQ">
    <property type="method" value="X-ray"/>
    <property type="resolution" value="2.38 A"/>
    <property type="chains" value="D/Q=23-169"/>
</dbReference>
<dbReference type="PDB" id="8GVM">
    <property type="method" value="X-ray"/>
    <property type="resolution" value="1.85 A"/>
    <property type="chains" value="D/Q=23-169"/>
</dbReference>
<dbReference type="PDB" id="8H8R">
    <property type="method" value="X-ray"/>
    <property type="resolution" value="1.70 A"/>
    <property type="chains" value="D/Q=23-169"/>
</dbReference>
<dbReference type="PDB" id="8H8S">
    <property type="method" value="X-ray"/>
    <property type="resolution" value="1.70 A"/>
    <property type="chains" value="D/Q=23-169"/>
</dbReference>
<dbReference type="PDB" id="8IJN">
    <property type="method" value="X-ray"/>
    <property type="resolution" value="1.80 A"/>
    <property type="chains" value="D/Q=23-169"/>
</dbReference>
<dbReference type="PDBsum" id="1OCC"/>
<dbReference type="PDBsum" id="1OCO"/>
<dbReference type="PDBsum" id="1OCR"/>
<dbReference type="PDBsum" id="1OCZ"/>
<dbReference type="PDBsum" id="1V54"/>
<dbReference type="PDBsum" id="1V55"/>
<dbReference type="PDBsum" id="2DYR"/>
<dbReference type="PDBsum" id="2DYS"/>
<dbReference type="PDBsum" id="2EIJ"/>
<dbReference type="PDBsum" id="2EIK"/>
<dbReference type="PDBsum" id="2EIL"/>
<dbReference type="PDBsum" id="2EIM"/>
<dbReference type="PDBsum" id="2EIN"/>
<dbReference type="PDBsum" id="2OCC"/>
<dbReference type="PDBsum" id="2Y69"/>
<dbReference type="PDBsum" id="2YBB"/>
<dbReference type="PDBsum" id="2ZXW"/>
<dbReference type="PDBsum" id="3ABK"/>
<dbReference type="PDBsum" id="3ABL"/>
<dbReference type="PDBsum" id="3ABM"/>
<dbReference type="PDBsum" id="3AG1"/>
<dbReference type="PDBsum" id="3AG2"/>
<dbReference type="PDBsum" id="3AG3"/>
<dbReference type="PDBsum" id="3AG4"/>
<dbReference type="PDBsum" id="3ASN"/>
<dbReference type="PDBsum" id="3ASO"/>
<dbReference type="PDBsum" id="3WG7"/>
<dbReference type="PDBsum" id="3X2Q"/>
<dbReference type="PDBsum" id="5B1A"/>
<dbReference type="PDBsum" id="5B1B"/>
<dbReference type="PDBsum" id="5B3S"/>
<dbReference type="PDBsum" id="5GPN"/>
<dbReference type="PDBsum" id="5IY5"/>
<dbReference type="PDBsum" id="5LUF"/>
<dbReference type="PDBsum" id="5W97"/>
<dbReference type="PDBsum" id="5WAU"/>
<dbReference type="PDBsum" id="5X19"/>
<dbReference type="PDBsum" id="5X1B"/>
<dbReference type="PDBsum" id="5X1F"/>
<dbReference type="PDBsum" id="5XDQ"/>
<dbReference type="PDBsum" id="5XDX"/>
<dbReference type="PDBsum" id="5XTH"/>
<dbReference type="PDBsum" id="5XTI"/>
<dbReference type="PDBsum" id="5Z84"/>
<dbReference type="PDBsum" id="5Z85"/>
<dbReference type="PDBsum" id="5Z86"/>
<dbReference type="PDBsum" id="5ZCO"/>
<dbReference type="PDBsum" id="5ZCP"/>
<dbReference type="PDBsum" id="5ZCQ"/>
<dbReference type="PDBsum" id="6J8M"/>
<dbReference type="PDBsum" id="6JUW"/>
<dbReference type="PDBsum" id="6JY3"/>
<dbReference type="PDBsum" id="6JY4"/>
<dbReference type="PDBsum" id="6NKN"/>
<dbReference type="PDBsum" id="6NMF"/>
<dbReference type="PDBsum" id="6NMP"/>
<dbReference type="PDBsum" id="7COH"/>
<dbReference type="PDBsum" id="7CP5"/>
<dbReference type="PDBsum" id="7D5W"/>
<dbReference type="PDBsum" id="7D5X"/>
<dbReference type="PDBsum" id="7DGQ"/>
<dbReference type="PDBsum" id="7DGR"/>
<dbReference type="PDBsum" id="7DGS"/>
<dbReference type="PDBsum" id="7DKF"/>
<dbReference type="PDBsum" id="7EV7"/>
<dbReference type="PDBsum" id="7THU"/>
<dbReference type="PDBsum" id="7TIE"/>
<dbReference type="PDBsum" id="7TIH"/>
<dbReference type="PDBsum" id="7TII"/>
<dbReference type="PDBsum" id="7VUW"/>
<dbReference type="PDBsum" id="7VVR"/>
<dbReference type="PDBsum" id="7W3E"/>
<dbReference type="PDBsum" id="7XMA"/>
<dbReference type="PDBsum" id="7XMB"/>
<dbReference type="PDBsum" id="7Y44"/>
<dbReference type="PDBsum" id="7YPY"/>
<dbReference type="PDBsum" id="8D4T"/>
<dbReference type="PDBsum" id="8GBT"/>
<dbReference type="PDBsum" id="8GCQ"/>
<dbReference type="PDBsum" id="8GVM"/>
<dbReference type="PDBsum" id="8H8R"/>
<dbReference type="PDBsum" id="8H8S"/>
<dbReference type="PDBsum" id="8IJN"/>
<dbReference type="EMDB" id="EMD-27196"/>
<dbReference type="EMDB" id="EMD-30673"/>
<dbReference type="EMDB" id="EMD-30674"/>
<dbReference type="EMDB" id="EMD-30675"/>
<dbReference type="EMDB" id="EMD-30706"/>
<dbReference type="EMDB" id="EMD-4107"/>
<dbReference type="EMDB" id="EMD-9534"/>
<dbReference type="SMR" id="P00423"/>
<dbReference type="CORUM" id="P00423"/>
<dbReference type="DIP" id="DIP-38979N"/>
<dbReference type="FunCoup" id="P00423">
    <property type="interactions" value="1807"/>
</dbReference>
<dbReference type="IntAct" id="P00423">
    <property type="interactions" value="3"/>
</dbReference>
<dbReference type="STRING" id="9913.ENSBTAP00000049613"/>
<dbReference type="GlyGen" id="P00423">
    <property type="glycosylation" value="1 site, 1 O-linked glycan (1 site)"/>
</dbReference>
<dbReference type="iPTMnet" id="P00423"/>
<dbReference type="PaxDb" id="9913-ENSBTAP00000049613"/>
<dbReference type="PeptideAtlas" id="P00423"/>
<dbReference type="Ensembl" id="ENSBTAT00000053881.3">
    <property type="protein sequence ID" value="ENSBTAP00000049613.2"/>
    <property type="gene ID" value="ENSBTAG00000016079.7"/>
</dbReference>
<dbReference type="GeneID" id="281090"/>
<dbReference type="KEGG" id="bta:281090"/>
<dbReference type="CTD" id="1327"/>
<dbReference type="VEuPathDB" id="HostDB:ENSBTAG00000016079"/>
<dbReference type="VGNC" id="VGNC:27634">
    <property type="gene designation" value="COX4I1"/>
</dbReference>
<dbReference type="eggNOG" id="KOG4075">
    <property type="taxonomic scope" value="Eukaryota"/>
</dbReference>
<dbReference type="GeneTree" id="ENSGT00390000002407"/>
<dbReference type="HOGENOM" id="CLU_117340_1_0_1"/>
<dbReference type="InParanoid" id="P00423"/>
<dbReference type="OMA" id="HGHEVTK"/>
<dbReference type="OrthoDB" id="186013at2759"/>
<dbReference type="TreeFam" id="TF105061"/>
<dbReference type="BRENDA" id="7.1.1.9">
    <property type="organism ID" value="908"/>
</dbReference>
<dbReference type="Reactome" id="R-BTA-5628897">
    <property type="pathway name" value="TP53 Regulates Metabolic Genes"/>
</dbReference>
<dbReference type="Reactome" id="R-BTA-611105">
    <property type="pathway name" value="Respiratory electron transport"/>
</dbReference>
<dbReference type="Reactome" id="R-BTA-9707564">
    <property type="pathway name" value="Cytoprotection by HMOX1"/>
</dbReference>
<dbReference type="Reactome" id="R-BTA-9864848">
    <property type="pathway name" value="Complex IV assembly"/>
</dbReference>
<dbReference type="UniPathway" id="UPA00705"/>
<dbReference type="EvolutionaryTrace" id="P00423"/>
<dbReference type="Proteomes" id="UP000009136">
    <property type="component" value="Chromosome 18"/>
</dbReference>
<dbReference type="Bgee" id="ENSBTAG00000016079">
    <property type="expression patterns" value="Expressed in cardiac atrium and 105 other cell types or tissues"/>
</dbReference>
<dbReference type="GO" id="GO:0005743">
    <property type="term" value="C:mitochondrial inner membrane"/>
    <property type="evidence" value="ECO:0007669"/>
    <property type="project" value="UniProtKB-SubCell"/>
</dbReference>
<dbReference type="GO" id="GO:0045277">
    <property type="term" value="C:respiratory chain complex IV"/>
    <property type="evidence" value="ECO:0000314"/>
    <property type="project" value="UniProtKB"/>
</dbReference>
<dbReference type="GO" id="GO:0006123">
    <property type="term" value="P:mitochondrial electron transport, cytochrome c to oxygen"/>
    <property type="evidence" value="ECO:0000318"/>
    <property type="project" value="GO_Central"/>
</dbReference>
<dbReference type="CDD" id="cd00922">
    <property type="entry name" value="Cyt_c_Oxidase_IV"/>
    <property type="match status" value="1"/>
</dbReference>
<dbReference type="FunFam" id="1.10.442.10:FF:000001">
    <property type="entry name" value="Cytochrome c oxidase subunit 4 isoform 1"/>
    <property type="match status" value="1"/>
</dbReference>
<dbReference type="Gene3D" id="1.10.442.10">
    <property type="entry name" value="Cytochrome c oxidase subunit IV"/>
    <property type="match status" value="1"/>
</dbReference>
<dbReference type="InterPro" id="IPR013288">
    <property type="entry name" value="Cyt_c_oxidase_su4"/>
</dbReference>
<dbReference type="InterPro" id="IPR004203">
    <property type="entry name" value="Cyt_c_oxidase_su4_fam"/>
</dbReference>
<dbReference type="InterPro" id="IPR036639">
    <property type="entry name" value="Cyt_c_oxidase_su4_sf"/>
</dbReference>
<dbReference type="PANTHER" id="PTHR10707:SF12">
    <property type="entry name" value="CYTOCHROME C OXIDASE SUBUNIT 4 ISOFORM 1, MITOCHONDRIAL"/>
    <property type="match status" value="1"/>
</dbReference>
<dbReference type="PANTHER" id="PTHR10707">
    <property type="entry name" value="CYTOCHROME C OXIDASE SUBUNIT IV"/>
    <property type="match status" value="1"/>
</dbReference>
<dbReference type="Pfam" id="PF02936">
    <property type="entry name" value="COX4"/>
    <property type="match status" value="1"/>
</dbReference>
<dbReference type="PRINTS" id="PR01873">
    <property type="entry name" value="CYTCOXIDASE4"/>
</dbReference>
<dbReference type="SUPFAM" id="SSF81406">
    <property type="entry name" value="Mitochondrial cytochrome c oxidase subunit IV"/>
    <property type="match status" value="1"/>
</dbReference>
<reference key="1">
    <citation type="journal article" date="1995" name="Gene">
        <title>Isolation and characterization of the functional gene encoding bovine cytochrome c oxidase subunit IV.</title>
        <authorList>
            <person name="Bachman N.J."/>
        </authorList>
    </citation>
    <scope>NUCLEOTIDE SEQUENCE [GENOMIC DNA]</scope>
</reference>
<reference key="2">
    <citation type="journal article" date="2005" name="BMC Genomics">
        <title>Characterization of 954 bovine full-CDS cDNA sequences.</title>
        <authorList>
            <person name="Harhay G.P."/>
            <person name="Sonstegard T.S."/>
            <person name="Keele J.W."/>
            <person name="Heaton M.P."/>
            <person name="Clawson M.L."/>
            <person name="Snelling W.M."/>
            <person name="Wiedmann R.T."/>
            <person name="Van Tassell C.P."/>
            <person name="Smith T.P.L."/>
        </authorList>
    </citation>
    <scope>NUCLEOTIDE SEQUENCE [LARGE SCALE MRNA]</scope>
</reference>
<reference key="3">
    <citation type="submission" date="2005-08" db="EMBL/GenBank/DDBJ databases">
        <authorList>
            <consortium name="NIH - Mammalian Gene Collection (MGC) project"/>
        </authorList>
    </citation>
    <scope>NUCLEOTIDE SEQUENCE [LARGE SCALE MRNA]</scope>
    <source>
        <strain>Crossbred X Angus</strain>
        <tissue>Liver</tissue>
    </source>
</reference>
<reference key="4">
    <citation type="journal article" date="1984" name="Proc. Natl. Acad. Sci. U.S.A.">
        <title>Isolation and characterization of a cDNA clone for bovine cytochrome c oxidase subunit IV.</title>
        <authorList>
            <person name="Lomax M.I."/>
            <person name="Bachman N.J."/>
            <person name="Nasoff M.S."/>
            <person name="Caruthers M.H."/>
            <person name="Grossman L.I."/>
        </authorList>
    </citation>
    <scope>NUCLEOTIDE SEQUENCE [MRNA] OF 1-104</scope>
</reference>
<reference key="5">
    <citation type="journal article" date="1979" name="Hoppe-Seyler's Z. Physiol. Chem.">
        <title>Studies on cytochrome c oxidase, VI. Polypeptide IV: the complete primary structure.</title>
        <authorList>
            <person name="Sacher R."/>
            <person name="Steffens G.J."/>
            <person name="Buse G."/>
        </authorList>
    </citation>
    <scope>PROTEIN SEQUENCE OF 23-109</scope>
    <source>
        <tissue>Heart</tissue>
    </source>
</reference>
<reference key="6">
    <citation type="journal article" date="1979" name="Hoppe-Seyler's Z. Physiol. Chem.">
        <title>Studies on cytochrome c oxidase, V. Polypeptide IV: alignment and amino acid sequences on cyanogen bromide fragments.</title>
        <authorList>
            <person name="Sacher R."/>
            <person name="Buse G."/>
            <person name="Steffens G.J."/>
        </authorList>
    </citation>
    <scope>PROTEIN SEQUENCE OF 23-109</scope>
    <source>
        <tissue>Heart</tissue>
    </source>
</reference>
<reference key="7">
    <citation type="journal article" date="2016" name="J. Biol. Chem.">
        <title>Purification of active respiratory supercomplex from bovine heart mitochondria enables functional studies.</title>
        <authorList>
            <person name="Shinzawa-Itoh K."/>
            <person name="Shimomura H."/>
            <person name="Yanagisawa S."/>
            <person name="Shimada S."/>
            <person name="Takahashi R."/>
            <person name="Oosaki M."/>
            <person name="Ogura T."/>
            <person name="Tsukihara T."/>
        </authorList>
    </citation>
    <scope>SUBUNIT</scope>
</reference>
<reference key="8">
    <citation type="journal article" date="1996" name="Science">
        <title>The whole structure of the 13-subunit oxidized cytochrome c oxidase at 2.8 A.</title>
        <authorList>
            <person name="Tsukihara T."/>
            <person name="Aoyama H."/>
            <person name="Yamashita E."/>
            <person name="Tomizaki T."/>
            <person name="Yamaguchi H."/>
            <person name="Shinzawa-Itoh K."/>
            <person name="Nakashima R."/>
            <person name="Yaono R."/>
            <person name="Yoshikawa S."/>
        </authorList>
    </citation>
    <scope>X-RAY CRYSTALLOGRAPHY (2.8 ANGSTROMS)</scope>
</reference>
<reference key="9">
    <citation type="journal article" date="1999" name="Acta Crystallogr. D">
        <title>Structure analysis of bovine heart cytochrome c oxidase at 2.8 A resolution.</title>
        <authorList>
            <person name="Tomizaki T."/>
            <person name="Yamashita E."/>
            <person name="Yamaguchi H."/>
            <person name="Aoyama H."/>
            <person name="Tsukihara T."/>
            <person name="Shinzawa-Itoh K."/>
            <person name="Nakashima R."/>
            <person name="Yaono R."/>
            <person name="Yoshikawa S."/>
        </authorList>
    </citation>
    <scope>X-RAY CRYSTALLOGRAPHY (2.8 ANGSTROMS)</scope>
    <source>
        <tissue>Heart</tissue>
    </source>
</reference>
<reference key="10">
    <citation type="journal article" date="2000" name="Acta Crystallogr. D">
        <title>X-ray structure of azide-bound fully oxidized cytochrome c oxidase from bovine heart at 2.9 A resolution.</title>
        <authorList>
            <person name="Fei M.J."/>
            <person name="Yamashita E."/>
            <person name="Inoue N."/>
            <person name="Yao M."/>
            <person name="Yamaguchi H."/>
            <person name="Tsukihara T."/>
            <person name="Shinzawa-Itoh K."/>
            <person name="Nakashima R."/>
            <person name="Yoshikawa S."/>
        </authorList>
    </citation>
    <scope>X-RAY CRYSTALLOGRAPHY (2.9 ANGSTROMS)</scope>
    <source>
        <tissue>Heart</tissue>
    </source>
</reference>
<reference key="11">
    <citation type="journal article" date="2009" name="Proc. Natl. Acad. Sci. U.S.A.">
        <title>A peroxide bridge between Fe and Cu ions in the O2 reduction site of fully oxidized cytochrome c oxidase could suppress the proton pump.</title>
        <authorList>
            <person name="Aoyama H."/>
            <person name="Muramoto K."/>
            <person name="Shinzawa-Itoh K."/>
            <person name="Hirata K."/>
            <person name="Yamashita E."/>
            <person name="Tsukihara T."/>
            <person name="Ogura T."/>
            <person name="Yoshikawa S."/>
        </authorList>
    </citation>
    <scope>X-RAY CRYSTALLOGRAPHY (1.95 ANGSTROMS)</scope>
</reference>
<reference key="12">
    <citation type="journal article" date="2016" name="Elife">
        <title>Functional asymmetry and electron flow in the bovine respirasome.</title>
        <authorList>
            <person name="Sousa J.S."/>
            <person name="Mills D.J."/>
            <person name="Vonck J."/>
            <person name="Kuehlbrandt W."/>
        </authorList>
    </citation>
    <scope>STRUCTURE BY ELECTRON MICROSCOPY (9.10 ANGSTROMS)</scope>
</reference>
<reference key="13">
    <citation type="journal article" date="2016" name="J. Biol. Chem.">
        <title>The Mg2+-containing water cluster of mammalian cytochrome c oxidase collects four pumping proton equivalents in each catalytic cycle.</title>
        <authorList>
            <person name="Yano N."/>
            <person name="Muramoto K."/>
            <person name="Shimada A."/>
            <person name="Takemura S."/>
            <person name="Baba J."/>
            <person name="Fujisawa H."/>
            <person name="Mochizuki M."/>
            <person name="Shinzawa-Itoh K."/>
            <person name="Yamashita E."/>
            <person name="Tsukihara T."/>
            <person name="Yoshikawa S."/>
        </authorList>
    </citation>
    <scope>X-RAY CRYSTALLOGRAPHY (1.50 ANGSTROMS)</scope>
</reference>
<reference key="14">
    <citation type="journal article" date="2019" name="Proc. Natl. Acad. Sci. U.S.A.">
        <title>Monomeric structure of an active form of bovine cytochrome c oxidase.</title>
        <authorList>
            <person name="Shinzawa-Itoh K."/>
            <person name="Sugimura T."/>
            <person name="Misaki T."/>
            <person name="Tadehara Y."/>
            <person name="Yamamoto S."/>
            <person name="Hanada M."/>
            <person name="Yano N."/>
            <person name="Nakagawa T."/>
            <person name="Uene S."/>
            <person name="Yamada T."/>
            <person name="Aoyama H."/>
            <person name="Yamashita E."/>
            <person name="Tsukihara T."/>
            <person name="Yoshikawa S."/>
            <person name="Muramoto K."/>
        </authorList>
    </citation>
    <scope>X-RAY CRYSTALLOGRAPHY (1.85 ANGSTROMS)</scope>
</reference>
<accession>P00423</accession>
<accession>Q3SZS0</accession>
<accession>Q5E991</accession>
<proteinExistence type="evidence at protein level"/>
<feature type="transit peptide" description="Mitochondrion" evidence="5 6">
    <location>
        <begin position="1"/>
        <end position="22"/>
    </location>
</feature>
<feature type="chain" id="PRO_0000006083" description="Cytochrome c oxidase subunit 4 isoform 1, mitochondrial">
    <location>
        <begin position="23"/>
        <end position="169"/>
    </location>
</feature>
<feature type="topological domain" description="Mitochondrial matrix" evidence="8">
    <location>
        <begin position="23"/>
        <end position="98"/>
    </location>
</feature>
<feature type="transmembrane region" description="Helical" evidence="8">
    <location>
        <begin position="99"/>
        <end position="124"/>
    </location>
</feature>
<feature type="topological domain" description="Mitochondrial intermembrane" evidence="8">
    <location>
        <begin position="125"/>
        <end position="169"/>
    </location>
</feature>
<feature type="modified residue" description="N6-acetyllysine; alternate" evidence="4">
    <location>
        <position position="29"/>
    </location>
</feature>
<feature type="modified residue" description="N6-succinyllysine; alternate" evidence="4">
    <location>
        <position position="29"/>
    </location>
</feature>
<feature type="modified residue" description="N6-acetyllysine" evidence="3">
    <location>
        <position position="53"/>
    </location>
</feature>
<feature type="modified residue" description="Phosphoserine" evidence="2">
    <location>
        <position position="56"/>
    </location>
</feature>
<feature type="modified residue" description="Phosphoserine" evidence="2">
    <location>
        <position position="58"/>
    </location>
</feature>
<feature type="modified residue" description="N6-acetyllysine; alternate" evidence="3">
    <location>
        <position position="60"/>
    </location>
</feature>
<feature type="modified residue" description="N6-succinyllysine; alternate" evidence="4">
    <location>
        <position position="60"/>
    </location>
</feature>
<feature type="modified residue" description="N6-acetyllysine" evidence="4">
    <location>
        <position position="67"/>
    </location>
</feature>
<feature type="helix" evidence="14">
    <location>
        <begin position="30"/>
        <end position="32"/>
    </location>
</feature>
<feature type="strand" evidence="15">
    <location>
        <begin position="33"/>
        <end position="35"/>
    </location>
</feature>
<feature type="strand" evidence="13">
    <location>
        <begin position="44"/>
        <end position="46"/>
    </location>
</feature>
<feature type="helix" evidence="14">
    <location>
        <begin position="57"/>
        <end position="65"/>
    </location>
</feature>
<feature type="helix" evidence="14">
    <location>
        <begin position="70"/>
        <end position="72"/>
    </location>
</feature>
<feature type="helix" evidence="14">
    <location>
        <begin position="75"/>
        <end position="85"/>
    </location>
</feature>
<feature type="helix" evidence="14">
    <location>
        <begin position="90"/>
        <end position="93"/>
    </location>
</feature>
<feature type="helix" evidence="14">
    <location>
        <begin position="99"/>
        <end position="124"/>
    </location>
</feature>
<feature type="helix" evidence="14">
    <location>
        <begin position="131"/>
        <end position="133"/>
    </location>
</feature>
<feature type="helix" evidence="14">
    <location>
        <begin position="135"/>
        <end position="147"/>
    </location>
</feature>
<feature type="turn" evidence="14">
    <location>
        <begin position="152"/>
        <end position="155"/>
    </location>
</feature>
<feature type="helix" evidence="14">
    <location>
        <begin position="157"/>
        <end position="159"/>
    </location>
</feature>
<feature type="turn" evidence="14">
    <location>
        <begin position="162"/>
        <end position="165"/>
    </location>
</feature>
<sequence>MLATRVFSLIGRRAISTSVCVRAHGSVVKSEDYALPSYVDRRDYPLPDVAHVKNLSASQKALKEKEKASWSSLSIDEKVELYRLKFKESFAEMNRSTNEWKTVVGAAMFFIGFTALLLIWEKHYVYGPIPHTFEEEWVAKQTKRMLDMKVAPIQGFSAKWDYDKNEWKK</sequence>
<comment type="function">
    <text evidence="1">Component of the cytochrome c oxidase, the last enzyme in the mitochondrial electron transport chain which drives oxidative phosphorylation. The respiratory chain contains 3 multisubunit complexes succinate dehydrogenase (complex II, CII), ubiquinol-cytochrome c oxidoreductase (cytochrome b-c1 complex, complex III, CIII) and cytochrome c oxidase (complex IV, CIV), that cooperate to transfer electrons derived from NADH and succinate to molecular oxygen, creating an electrochemical gradient over the inner membrane that drives transmembrane transport and the ATP synthase. Cytochrome c oxidase is the component of the respiratory chain that catalyzes the reduction of oxygen to water. Electrons originating from reduced cytochrome c in the intermembrane space (IMS) are transferred via the dinuclear copper A center (CU(A)) of subunit 2 and heme A of subunit 1 to the active site in subunit 1, a binuclear center (BNC) formed by heme A3 and copper B (CU(B)). The BNC reduces molecular oxygen to 2 water molecules using 4 electrons from cytochrome c in the IMS and 4 protons from the mitochondrial matrix.</text>
</comment>
<comment type="pathway">
    <text evidence="1">Energy metabolism; oxidative phosphorylation.</text>
</comment>
<comment type="subunit">
    <text evidence="2 3 4 7 9 11">Component of the cytochrome c oxidase (complex IV, CIV), a multisubunit enzyme composed of 14 subunits. The complex is composed of a catalytic core of 3 subunits MT-CO1, MT-CO2 and MT-CO3, encoded in the mitochondrial DNA, and 11 supernumerary subunits COX4I1 (or COX4I2), COX5A, COX5B, COX6A2 (or COX6A1), COX6B1 (or COX6B2), COX6C, COX7A1 (or COX7A2), COX7B, COX7C, COX8B and NDUFA4, which are encoded in the nuclear genome (PubMed:8638158). The complex exists as a monomer or a dimer and forms supercomplexes (SCs) in the inner mitochondrial membrane with NADH-ubiquinone oxidoreductase (complex I, CI) and ubiquinol-cytochrome c oxidoreductase (cytochrome b-c1 complex, complex III, CIII), resulting in different assemblies (supercomplex SCI(1)III(2)IV(1) and megacomplex MCI(2)III(2)IV(2)) (PubMed:26698328, PubMed:27830641). Interacts with PHB2; the interaction decreases in absence of SPHK2 (By similarity). Interacts with AFG1L (By similarity). Interacts with ABCB7; this interaction allows the regulation of cellular iron homeostasis and cellular reactive oxygen species (ROS) levels in cardiomyocytes (By similarity). Interacts with FLVCR2; this interaction occurs in the absence of heme and is disrupted upon heme binding. Interacts with IRGC (By similarity).</text>
</comment>
<comment type="subcellular location">
    <subcellularLocation>
        <location evidence="8 10">Mitochondrion inner membrane</location>
        <topology evidence="8 10">Single-pass membrane protein</topology>
    </subcellularLocation>
</comment>
<comment type="similarity">
    <text evidence="12">Belongs to the cytochrome c oxidase IV family.</text>
</comment>
<keyword id="KW-0002">3D-structure</keyword>
<keyword id="KW-0007">Acetylation</keyword>
<keyword id="KW-0903">Direct protein sequencing</keyword>
<keyword id="KW-0472">Membrane</keyword>
<keyword id="KW-0496">Mitochondrion</keyword>
<keyword id="KW-0999">Mitochondrion inner membrane</keyword>
<keyword id="KW-0597">Phosphoprotein</keyword>
<keyword id="KW-1185">Reference proteome</keyword>
<keyword id="KW-0809">Transit peptide</keyword>
<keyword id="KW-0812">Transmembrane</keyword>
<keyword id="KW-1133">Transmembrane helix</keyword>
<evidence type="ECO:0000250" key="1">
    <source>
        <dbReference type="UniProtKB" id="P00424"/>
    </source>
</evidence>
<evidence type="ECO:0000250" key="2">
    <source>
        <dbReference type="UniProtKB" id="P10888"/>
    </source>
</evidence>
<evidence type="ECO:0000250" key="3">
    <source>
        <dbReference type="UniProtKB" id="P13073"/>
    </source>
</evidence>
<evidence type="ECO:0000250" key="4">
    <source>
        <dbReference type="UniProtKB" id="P19783"/>
    </source>
</evidence>
<evidence type="ECO:0000269" key="5">
    <source>
    </source>
</evidence>
<evidence type="ECO:0000269" key="6">
    <source>
    </source>
</evidence>
<evidence type="ECO:0000269" key="7">
    <source>
    </source>
</evidence>
<evidence type="ECO:0000269" key="8">
    <source>
    </source>
</evidence>
<evidence type="ECO:0000269" key="9">
    <source>
    </source>
</evidence>
<evidence type="ECO:0000269" key="10">
    <source>
    </source>
</evidence>
<evidence type="ECO:0000269" key="11">
    <source>
    </source>
</evidence>
<evidence type="ECO:0000305" key="12"/>
<evidence type="ECO:0007829" key="13">
    <source>
        <dbReference type="PDB" id="1OCC"/>
    </source>
</evidence>
<evidence type="ECO:0007829" key="14">
    <source>
        <dbReference type="PDB" id="7COH"/>
    </source>
</evidence>
<evidence type="ECO:0007829" key="15">
    <source>
        <dbReference type="PDB" id="8GBT"/>
    </source>
</evidence>
<organism>
    <name type="scientific">Bos taurus</name>
    <name type="common">Bovine</name>
    <dbReference type="NCBI Taxonomy" id="9913"/>
    <lineage>
        <taxon>Eukaryota</taxon>
        <taxon>Metazoa</taxon>
        <taxon>Chordata</taxon>
        <taxon>Craniata</taxon>
        <taxon>Vertebrata</taxon>
        <taxon>Euteleostomi</taxon>
        <taxon>Mammalia</taxon>
        <taxon>Eutheria</taxon>
        <taxon>Laurasiatheria</taxon>
        <taxon>Artiodactyla</taxon>
        <taxon>Ruminantia</taxon>
        <taxon>Pecora</taxon>
        <taxon>Bovidae</taxon>
        <taxon>Bovinae</taxon>
        <taxon>Bos</taxon>
    </lineage>
</organism>
<name>COX41_BOVIN</name>